<protein>
    <recommendedName>
        <fullName evidence="1">Argininosuccinate lyase</fullName>
        <shortName evidence="1">ASAL</shortName>
        <ecNumber evidence="1">4.3.2.1</ecNumber>
    </recommendedName>
    <alternativeName>
        <fullName evidence="1">Arginosuccinase</fullName>
    </alternativeName>
</protein>
<gene>
    <name evidence="1" type="primary">argH</name>
    <name type="ordered locus">P9515_00111</name>
</gene>
<keyword id="KW-0028">Amino-acid biosynthesis</keyword>
<keyword id="KW-0055">Arginine biosynthesis</keyword>
<keyword id="KW-0963">Cytoplasm</keyword>
<keyword id="KW-0456">Lyase</keyword>
<feature type="chain" id="PRO_1000000521" description="Argininosuccinate lyase">
    <location>
        <begin position="1"/>
        <end position="459"/>
    </location>
</feature>
<comment type="catalytic activity">
    <reaction evidence="1">
        <text>2-(N(omega)-L-arginino)succinate = fumarate + L-arginine</text>
        <dbReference type="Rhea" id="RHEA:24020"/>
        <dbReference type="ChEBI" id="CHEBI:29806"/>
        <dbReference type="ChEBI" id="CHEBI:32682"/>
        <dbReference type="ChEBI" id="CHEBI:57472"/>
        <dbReference type="EC" id="4.3.2.1"/>
    </reaction>
</comment>
<comment type="pathway">
    <text evidence="1">Amino-acid biosynthesis; L-arginine biosynthesis; L-arginine from L-ornithine and carbamoyl phosphate: step 3/3.</text>
</comment>
<comment type="subcellular location">
    <subcellularLocation>
        <location evidence="1">Cytoplasm</location>
    </subcellularLocation>
</comment>
<comment type="similarity">
    <text evidence="1">Belongs to the lyase 1 family. Argininosuccinate lyase subfamily.</text>
</comment>
<proteinExistence type="inferred from homology"/>
<reference key="1">
    <citation type="journal article" date="2007" name="PLoS Genet.">
        <title>Patterns and implications of gene gain and loss in the evolution of Prochlorococcus.</title>
        <authorList>
            <person name="Kettler G.C."/>
            <person name="Martiny A.C."/>
            <person name="Huang K."/>
            <person name="Zucker J."/>
            <person name="Coleman M.L."/>
            <person name="Rodrigue S."/>
            <person name="Chen F."/>
            <person name="Lapidus A."/>
            <person name="Ferriera S."/>
            <person name="Johnson J."/>
            <person name="Steglich C."/>
            <person name="Church G.M."/>
            <person name="Richardson P."/>
            <person name="Chisholm S.W."/>
        </authorList>
    </citation>
    <scope>NUCLEOTIDE SEQUENCE [LARGE SCALE GENOMIC DNA]</scope>
    <source>
        <strain>MIT 9515</strain>
    </source>
</reference>
<dbReference type="EC" id="4.3.2.1" evidence="1"/>
<dbReference type="EMBL" id="CP000552">
    <property type="protein sequence ID" value="ABM71220.1"/>
    <property type="molecule type" value="Genomic_DNA"/>
</dbReference>
<dbReference type="RefSeq" id="WP_011819337.1">
    <property type="nucleotide sequence ID" value="NC_008817.1"/>
</dbReference>
<dbReference type="SMR" id="A2BTV0"/>
<dbReference type="STRING" id="167542.P9515_00111"/>
<dbReference type="GeneID" id="60202087"/>
<dbReference type="KEGG" id="pmc:P9515_00111"/>
<dbReference type="eggNOG" id="COG0165">
    <property type="taxonomic scope" value="Bacteria"/>
</dbReference>
<dbReference type="HOGENOM" id="CLU_027272_2_3_3"/>
<dbReference type="OrthoDB" id="9769623at2"/>
<dbReference type="UniPathway" id="UPA00068">
    <property type="reaction ID" value="UER00114"/>
</dbReference>
<dbReference type="Proteomes" id="UP000001589">
    <property type="component" value="Chromosome"/>
</dbReference>
<dbReference type="GO" id="GO:0005829">
    <property type="term" value="C:cytosol"/>
    <property type="evidence" value="ECO:0007669"/>
    <property type="project" value="TreeGrafter"/>
</dbReference>
<dbReference type="GO" id="GO:0004056">
    <property type="term" value="F:argininosuccinate lyase activity"/>
    <property type="evidence" value="ECO:0007669"/>
    <property type="project" value="UniProtKB-UniRule"/>
</dbReference>
<dbReference type="GO" id="GO:0042450">
    <property type="term" value="P:arginine biosynthetic process via ornithine"/>
    <property type="evidence" value="ECO:0007669"/>
    <property type="project" value="InterPro"/>
</dbReference>
<dbReference type="GO" id="GO:0006526">
    <property type="term" value="P:L-arginine biosynthetic process"/>
    <property type="evidence" value="ECO:0007669"/>
    <property type="project" value="UniProtKB-UniRule"/>
</dbReference>
<dbReference type="CDD" id="cd01359">
    <property type="entry name" value="Argininosuccinate_lyase"/>
    <property type="match status" value="1"/>
</dbReference>
<dbReference type="FunFam" id="1.10.275.10:FF:000002">
    <property type="entry name" value="Argininosuccinate lyase"/>
    <property type="match status" value="1"/>
</dbReference>
<dbReference type="FunFam" id="1.10.40.30:FF:000001">
    <property type="entry name" value="Argininosuccinate lyase"/>
    <property type="match status" value="1"/>
</dbReference>
<dbReference type="FunFam" id="1.20.200.10:FF:000015">
    <property type="entry name" value="argininosuccinate lyase isoform X2"/>
    <property type="match status" value="1"/>
</dbReference>
<dbReference type="Gene3D" id="1.10.40.30">
    <property type="entry name" value="Fumarase/aspartase (C-terminal domain)"/>
    <property type="match status" value="1"/>
</dbReference>
<dbReference type="Gene3D" id="1.20.200.10">
    <property type="entry name" value="Fumarase/aspartase (Central domain)"/>
    <property type="match status" value="1"/>
</dbReference>
<dbReference type="Gene3D" id="1.10.275.10">
    <property type="entry name" value="Fumarase/aspartase (N-terminal domain)"/>
    <property type="match status" value="1"/>
</dbReference>
<dbReference type="HAMAP" id="MF_00006">
    <property type="entry name" value="Arg_succ_lyase"/>
    <property type="match status" value="1"/>
</dbReference>
<dbReference type="InterPro" id="IPR029419">
    <property type="entry name" value="Arg_succ_lyase_C"/>
</dbReference>
<dbReference type="InterPro" id="IPR009049">
    <property type="entry name" value="Argininosuccinate_lyase"/>
</dbReference>
<dbReference type="InterPro" id="IPR024083">
    <property type="entry name" value="Fumarase/histidase_N"/>
</dbReference>
<dbReference type="InterPro" id="IPR020557">
    <property type="entry name" value="Fumarate_lyase_CS"/>
</dbReference>
<dbReference type="InterPro" id="IPR000362">
    <property type="entry name" value="Fumarate_lyase_fam"/>
</dbReference>
<dbReference type="InterPro" id="IPR022761">
    <property type="entry name" value="Fumarate_lyase_N"/>
</dbReference>
<dbReference type="InterPro" id="IPR008948">
    <property type="entry name" value="L-Aspartase-like"/>
</dbReference>
<dbReference type="NCBIfam" id="TIGR00838">
    <property type="entry name" value="argH"/>
    <property type="match status" value="1"/>
</dbReference>
<dbReference type="PANTHER" id="PTHR43814">
    <property type="entry name" value="ARGININOSUCCINATE LYASE"/>
    <property type="match status" value="1"/>
</dbReference>
<dbReference type="PANTHER" id="PTHR43814:SF1">
    <property type="entry name" value="ARGININOSUCCINATE LYASE"/>
    <property type="match status" value="1"/>
</dbReference>
<dbReference type="Pfam" id="PF14698">
    <property type="entry name" value="ASL_C2"/>
    <property type="match status" value="1"/>
</dbReference>
<dbReference type="Pfam" id="PF00206">
    <property type="entry name" value="Lyase_1"/>
    <property type="match status" value="1"/>
</dbReference>
<dbReference type="PRINTS" id="PR00145">
    <property type="entry name" value="ARGSUCLYASE"/>
</dbReference>
<dbReference type="PRINTS" id="PR00149">
    <property type="entry name" value="FUMRATELYASE"/>
</dbReference>
<dbReference type="SUPFAM" id="SSF48557">
    <property type="entry name" value="L-aspartase-like"/>
    <property type="match status" value="1"/>
</dbReference>
<dbReference type="PROSITE" id="PS00163">
    <property type="entry name" value="FUMARATE_LYASES"/>
    <property type="match status" value="1"/>
</dbReference>
<sequence>MSKVWSNRFESSLNPFIEEFNASIGFDKTLIFEDIDCSIAHAKMLGKTKVLSADESQKIIEGLENIKQDFIKGEFSPGAPSEDIHYSIEEKLIDLIGDTGKKLHTGRSRNDQVGTDIRLWLRKKIDTIDNLLAELQNSLFAVAESNIYTLIPGYTHMQRAQPLSLAHHFLAYLEMFQRDRERLREVRARVNISPLGAAALAGTKIKIDRYFTASELGFDNIYKNSIDAVSDRDFCIEFASASALIMSHLSRISEEIILWVTDEFSFAKLTDKCATGSSLMPQKKNPDVPELIRGKTGRVYGNLHTLLTLIKGVPLAYNKDFQEDKEPIFDTVDTISSCLKAMRILLDEGIEFNVDKLIDSVNNDFSNATDLADYLVSKQVPFRKAYQIVGDIVKYCLTKNILFKDLNLSEFQTFHDEFKEDIYENLNPMNVVKSRNSVGGTGFEQVEIELNNWKKKLFT</sequence>
<organism>
    <name type="scientific">Prochlorococcus marinus (strain MIT 9515)</name>
    <dbReference type="NCBI Taxonomy" id="167542"/>
    <lineage>
        <taxon>Bacteria</taxon>
        <taxon>Bacillati</taxon>
        <taxon>Cyanobacteriota</taxon>
        <taxon>Cyanophyceae</taxon>
        <taxon>Synechococcales</taxon>
        <taxon>Prochlorococcaceae</taxon>
        <taxon>Prochlorococcus</taxon>
    </lineage>
</organism>
<accession>A2BTV0</accession>
<name>ARLY_PROM5</name>
<evidence type="ECO:0000255" key="1">
    <source>
        <dbReference type="HAMAP-Rule" id="MF_00006"/>
    </source>
</evidence>